<sequence length="50" mass="5814">MPITDPELVAIFEKRVLNKKVCRRCGALNPMSATKCRRCRSKNLRPKKKK</sequence>
<name>RL40_AERPE</name>
<gene>
    <name evidence="1" type="primary">rpl40e</name>
    <name type="ordered locus">APE_0113a</name>
    <name type="ORF">APES002</name>
</gene>
<accession>Q9YFY7</accession>
<keyword id="KW-1185">Reference proteome</keyword>
<keyword id="KW-0687">Ribonucleoprotein</keyword>
<keyword id="KW-0689">Ribosomal protein</keyword>
<comment type="similarity">
    <text evidence="1">Belongs to the eukaryotic ribosomal protein eL40 family.</text>
</comment>
<organism>
    <name type="scientific">Aeropyrum pernix (strain ATCC 700893 / DSM 11879 / JCM 9820 / NBRC 100138 / K1)</name>
    <dbReference type="NCBI Taxonomy" id="272557"/>
    <lineage>
        <taxon>Archaea</taxon>
        <taxon>Thermoproteota</taxon>
        <taxon>Thermoprotei</taxon>
        <taxon>Desulfurococcales</taxon>
        <taxon>Desulfurococcaceae</taxon>
        <taxon>Aeropyrum</taxon>
    </lineage>
</organism>
<feature type="chain" id="PRO_0000138776" description="Large ribosomal subunit protein eL40">
    <location>
        <begin position="1"/>
        <end position="50"/>
    </location>
</feature>
<dbReference type="EMBL" id="BA000002">
    <property type="protein sequence ID" value="BAA79024.1"/>
    <property type="molecule type" value="Genomic_DNA"/>
</dbReference>
<dbReference type="PIR" id="F72765">
    <property type="entry name" value="F72765"/>
</dbReference>
<dbReference type="RefSeq" id="WP_010865498.1">
    <property type="nucleotide sequence ID" value="NC_000854.2"/>
</dbReference>
<dbReference type="SMR" id="Q9YFY7"/>
<dbReference type="STRING" id="272557.APE_0113a"/>
<dbReference type="EnsemblBacteria" id="BAA79024">
    <property type="protein sequence ID" value="BAA79024"/>
    <property type="gene ID" value="APE_0113a"/>
</dbReference>
<dbReference type="KEGG" id="ape:APE_0113a"/>
<dbReference type="PATRIC" id="fig|272557.25.peg.74"/>
<dbReference type="eggNOG" id="arCOG04049">
    <property type="taxonomic scope" value="Archaea"/>
</dbReference>
<dbReference type="Proteomes" id="UP000002518">
    <property type="component" value="Chromosome"/>
</dbReference>
<dbReference type="GO" id="GO:1990904">
    <property type="term" value="C:ribonucleoprotein complex"/>
    <property type="evidence" value="ECO:0007669"/>
    <property type="project" value="UniProtKB-KW"/>
</dbReference>
<dbReference type="GO" id="GO:0005840">
    <property type="term" value="C:ribosome"/>
    <property type="evidence" value="ECO:0007669"/>
    <property type="project" value="UniProtKB-KW"/>
</dbReference>
<dbReference type="GO" id="GO:0003735">
    <property type="term" value="F:structural constituent of ribosome"/>
    <property type="evidence" value="ECO:0007669"/>
    <property type="project" value="InterPro"/>
</dbReference>
<dbReference type="GO" id="GO:0006412">
    <property type="term" value="P:translation"/>
    <property type="evidence" value="ECO:0007669"/>
    <property type="project" value="UniProtKB-UniRule"/>
</dbReference>
<dbReference type="Gene3D" id="4.10.1060.50">
    <property type="match status" value="1"/>
</dbReference>
<dbReference type="HAMAP" id="MF_00788">
    <property type="entry name" value="Ribosomal_eL40"/>
    <property type="match status" value="1"/>
</dbReference>
<dbReference type="InterPro" id="IPR023657">
    <property type="entry name" value="Ribosomal_eL40_arc"/>
</dbReference>
<dbReference type="InterPro" id="IPR001975">
    <property type="entry name" value="Ribosomal_eL40_dom"/>
</dbReference>
<dbReference type="InterPro" id="IPR038587">
    <property type="entry name" value="Ribosomal_eL40_sf"/>
</dbReference>
<dbReference type="InterPro" id="IPR011332">
    <property type="entry name" value="Ribosomal_zn-bd"/>
</dbReference>
<dbReference type="NCBIfam" id="NF003161">
    <property type="entry name" value="PRK04136.1"/>
    <property type="match status" value="1"/>
</dbReference>
<dbReference type="PANTHER" id="PTHR39649">
    <property type="entry name" value="50S RIBOSOMAL PROTEIN L40E"/>
    <property type="match status" value="1"/>
</dbReference>
<dbReference type="PANTHER" id="PTHR39649:SF1">
    <property type="entry name" value="LARGE RIBOSOMAL SUBUNIT PROTEIN EL40"/>
    <property type="match status" value="1"/>
</dbReference>
<dbReference type="Pfam" id="PF01020">
    <property type="entry name" value="Ribosomal_L40e"/>
    <property type="match status" value="1"/>
</dbReference>
<dbReference type="SMART" id="SM01377">
    <property type="entry name" value="Ribosomal_L40e"/>
    <property type="match status" value="1"/>
</dbReference>
<dbReference type="SUPFAM" id="SSF57829">
    <property type="entry name" value="Zn-binding ribosomal proteins"/>
    <property type="match status" value="1"/>
</dbReference>
<protein>
    <recommendedName>
        <fullName evidence="1">Large ribosomal subunit protein eL40</fullName>
    </recommendedName>
    <alternativeName>
        <fullName evidence="2">50S ribosomal protein L40e</fullName>
    </alternativeName>
</protein>
<proteinExistence type="inferred from homology"/>
<evidence type="ECO:0000255" key="1">
    <source>
        <dbReference type="HAMAP-Rule" id="MF_00788"/>
    </source>
</evidence>
<evidence type="ECO:0000305" key="2"/>
<reference key="1">
    <citation type="journal article" date="1999" name="DNA Res.">
        <title>Complete genome sequence of an aerobic hyper-thermophilic crenarchaeon, Aeropyrum pernix K1.</title>
        <authorList>
            <person name="Kawarabayasi Y."/>
            <person name="Hino Y."/>
            <person name="Horikawa H."/>
            <person name="Yamazaki S."/>
            <person name="Haikawa Y."/>
            <person name="Jin-no K."/>
            <person name="Takahashi M."/>
            <person name="Sekine M."/>
            <person name="Baba S."/>
            <person name="Ankai A."/>
            <person name="Kosugi H."/>
            <person name="Hosoyama A."/>
            <person name="Fukui S."/>
            <person name="Nagai Y."/>
            <person name="Nishijima K."/>
            <person name="Nakazawa H."/>
            <person name="Takamiya M."/>
            <person name="Masuda S."/>
            <person name="Funahashi T."/>
            <person name="Tanaka T."/>
            <person name="Kudoh Y."/>
            <person name="Yamazaki J."/>
            <person name="Kushida N."/>
            <person name="Oguchi A."/>
            <person name="Aoki K."/>
            <person name="Kubota K."/>
            <person name="Nakamura Y."/>
            <person name="Nomura N."/>
            <person name="Sako Y."/>
            <person name="Kikuchi H."/>
        </authorList>
    </citation>
    <scope>NUCLEOTIDE SEQUENCE [LARGE SCALE GENOMIC DNA]</scope>
    <source>
        <strain>ATCC 700893 / DSM 11879 / JCM 9820 / NBRC 100138 / K1</strain>
    </source>
</reference>